<comment type="catalytic activity">
    <reaction evidence="1">
        <text>L-glutamine + H2O = L-glutamate + NH4(+)</text>
        <dbReference type="Rhea" id="RHEA:15889"/>
        <dbReference type="ChEBI" id="CHEBI:15377"/>
        <dbReference type="ChEBI" id="CHEBI:28938"/>
        <dbReference type="ChEBI" id="CHEBI:29985"/>
        <dbReference type="ChEBI" id="CHEBI:58359"/>
        <dbReference type="EC" id="3.5.1.2"/>
    </reaction>
</comment>
<comment type="subunit">
    <text evidence="1">Homotetramer.</text>
</comment>
<comment type="similarity">
    <text evidence="1">Belongs to the glutaminase family.</text>
</comment>
<protein>
    <recommendedName>
        <fullName evidence="1">Glutaminase</fullName>
        <ecNumber evidence="1">3.5.1.2</ecNumber>
    </recommendedName>
</protein>
<accession>B5F610</accession>
<feature type="chain" id="PRO_1000115704" description="Glutaminase">
    <location>
        <begin position="1"/>
        <end position="308"/>
    </location>
</feature>
<feature type="binding site" evidence="1">
    <location>
        <position position="66"/>
    </location>
    <ligand>
        <name>substrate</name>
    </ligand>
</feature>
<feature type="binding site" evidence="1">
    <location>
        <position position="117"/>
    </location>
    <ligand>
        <name>substrate</name>
    </ligand>
</feature>
<feature type="binding site" evidence="1">
    <location>
        <position position="161"/>
    </location>
    <ligand>
        <name>substrate</name>
    </ligand>
</feature>
<feature type="binding site" evidence="1">
    <location>
        <position position="168"/>
    </location>
    <ligand>
        <name>substrate</name>
    </ligand>
</feature>
<feature type="binding site" evidence="1">
    <location>
        <position position="192"/>
    </location>
    <ligand>
        <name>substrate</name>
    </ligand>
</feature>
<feature type="binding site" evidence="1">
    <location>
        <position position="244"/>
    </location>
    <ligand>
        <name>substrate</name>
    </ligand>
</feature>
<feature type="binding site" evidence="1">
    <location>
        <position position="262"/>
    </location>
    <ligand>
        <name>substrate</name>
    </ligand>
</feature>
<organism>
    <name type="scientific">Salmonella agona (strain SL483)</name>
    <dbReference type="NCBI Taxonomy" id="454166"/>
    <lineage>
        <taxon>Bacteria</taxon>
        <taxon>Pseudomonadati</taxon>
        <taxon>Pseudomonadota</taxon>
        <taxon>Gammaproteobacteria</taxon>
        <taxon>Enterobacterales</taxon>
        <taxon>Enterobacteriaceae</taxon>
        <taxon>Salmonella</taxon>
    </lineage>
</organism>
<sequence>MARAMDNAILETILQRVRPLIGQGKVADYIPALASVEGSKLGIAICTVDGQHYQAGDAHERFSIQSISKVLSLVVAMRHYPEEEIWQRVGKDPSGSPFNSLVQLEMEQGIPRNPFINAGALVVCDMLQGRLSAPRQRMLEVVRALCGVSDITYDVTVARSEFEHSARNAAIAWLMKSFGNFHHDVPTVLQNYFHYCALKMSCMELARTFVFLANQGEAFHLDEPVVTPMQARQINALMATSGMYQNAGEFAWRVGLPAKSGVGGGIVAIVPHEMAIAVWSPELDPAGNSLAGIAALEQLTQTLGRSVY</sequence>
<gene>
    <name evidence="1" type="primary">glsA</name>
    <name type="ordered locus">SeAg_B1645</name>
</gene>
<proteinExistence type="inferred from homology"/>
<name>GLSA_SALA4</name>
<keyword id="KW-0378">Hydrolase</keyword>
<evidence type="ECO:0000255" key="1">
    <source>
        <dbReference type="HAMAP-Rule" id="MF_00313"/>
    </source>
</evidence>
<reference key="1">
    <citation type="journal article" date="2011" name="J. Bacteriol.">
        <title>Comparative genomics of 28 Salmonella enterica isolates: evidence for CRISPR-mediated adaptive sublineage evolution.</title>
        <authorList>
            <person name="Fricke W.F."/>
            <person name="Mammel M.K."/>
            <person name="McDermott P.F."/>
            <person name="Tartera C."/>
            <person name="White D.G."/>
            <person name="Leclerc J.E."/>
            <person name="Ravel J."/>
            <person name="Cebula T.A."/>
        </authorList>
    </citation>
    <scope>NUCLEOTIDE SEQUENCE [LARGE SCALE GENOMIC DNA]</scope>
    <source>
        <strain>SL483</strain>
    </source>
</reference>
<dbReference type="EC" id="3.5.1.2" evidence="1"/>
<dbReference type="EMBL" id="CP001138">
    <property type="protein sequence ID" value="ACH50241.1"/>
    <property type="molecule type" value="Genomic_DNA"/>
</dbReference>
<dbReference type="SMR" id="B5F610"/>
<dbReference type="KEGG" id="sea:SeAg_B1645"/>
<dbReference type="HOGENOM" id="CLU_027932_1_1_6"/>
<dbReference type="Proteomes" id="UP000008819">
    <property type="component" value="Chromosome"/>
</dbReference>
<dbReference type="GO" id="GO:0004359">
    <property type="term" value="F:glutaminase activity"/>
    <property type="evidence" value="ECO:0007669"/>
    <property type="project" value="UniProtKB-UniRule"/>
</dbReference>
<dbReference type="GO" id="GO:0006537">
    <property type="term" value="P:glutamate biosynthetic process"/>
    <property type="evidence" value="ECO:0007669"/>
    <property type="project" value="TreeGrafter"/>
</dbReference>
<dbReference type="GO" id="GO:0006543">
    <property type="term" value="P:glutamine catabolic process"/>
    <property type="evidence" value="ECO:0007669"/>
    <property type="project" value="TreeGrafter"/>
</dbReference>
<dbReference type="FunFam" id="3.40.710.10:FF:000005">
    <property type="entry name" value="Glutaminase"/>
    <property type="match status" value="1"/>
</dbReference>
<dbReference type="Gene3D" id="3.40.710.10">
    <property type="entry name" value="DD-peptidase/beta-lactamase superfamily"/>
    <property type="match status" value="1"/>
</dbReference>
<dbReference type="HAMAP" id="MF_00313">
    <property type="entry name" value="Glutaminase"/>
    <property type="match status" value="1"/>
</dbReference>
<dbReference type="InterPro" id="IPR012338">
    <property type="entry name" value="Beta-lactam/transpept-like"/>
</dbReference>
<dbReference type="InterPro" id="IPR015868">
    <property type="entry name" value="Glutaminase"/>
</dbReference>
<dbReference type="NCBIfam" id="TIGR03814">
    <property type="entry name" value="Gln_ase"/>
    <property type="match status" value="1"/>
</dbReference>
<dbReference type="NCBIfam" id="NF002132">
    <property type="entry name" value="PRK00971.1-1"/>
    <property type="match status" value="1"/>
</dbReference>
<dbReference type="NCBIfam" id="NF002133">
    <property type="entry name" value="PRK00971.1-2"/>
    <property type="match status" value="1"/>
</dbReference>
<dbReference type="PANTHER" id="PTHR12544">
    <property type="entry name" value="GLUTAMINASE"/>
    <property type="match status" value="1"/>
</dbReference>
<dbReference type="PANTHER" id="PTHR12544:SF29">
    <property type="entry name" value="GLUTAMINASE"/>
    <property type="match status" value="1"/>
</dbReference>
<dbReference type="Pfam" id="PF04960">
    <property type="entry name" value="Glutaminase"/>
    <property type="match status" value="1"/>
</dbReference>
<dbReference type="SUPFAM" id="SSF56601">
    <property type="entry name" value="beta-lactamase/transpeptidase-like"/>
    <property type="match status" value="1"/>
</dbReference>